<name>SLS11_TRYCC</name>
<evidence type="ECO:0000250" key="1"/>
<evidence type="ECO:0000255" key="2"/>
<evidence type="ECO:0000269" key="3">
    <source>
    </source>
</evidence>
<evidence type="ECO:0000303" key="4">
    <source>
    </source>
</evidence>
<evidence type="ECO:0000305" key="5"/>
<comment type="function">
    <text evidence="3">Bidirectional lipid inositolphosphotransferase capable of converting phosphatidylinositol (PI) and ceramide to inositol-phosphorylceramide (IPC) and diacylglycerol (DAG) and vice versa. Direction is dependent on the relative concentrations of DAG and ceramide as phosphoinositol acceptors. Essential for viability of the pathogenic bloodstream stage of this human protozoan parasite and, consequently, can be considered as potential drug target.</text>
</comment>
<comment type="subcellular location">
    <subcellularLocation>
        <location evidence="2">Membrane</location>
        <topology evidence="2">Multi-pass membrane protein</topology>
    </subcellularLocation>
</comment>
<comment type="similarity">
    <text evidence="2">Belongs to the sphingomyelin synthase family.</text>
</comment>
<keyword id="KW-0418">Kinase</keyword>
<keyword id="KW-0443">Lipid metabolism</keyword>
<keyword id="KW-0472">Membrane</keyword>
<keyword id="KW-1185">Reference proteome</keyword>
<keyword id="KW-0746">Sphingolipid metabolism</keyword>
<keyword id="KW-0808">Transferase</keyword>
<keyword id="KW-0812">Transmembrane</keyword>
<keyword id="KW-1133">Transmembrane helix</keyword>
<protein>
    <recommendedName>
        <fullName evidence="4">Phosphatidylinositol:ceramide inositolphosphotransferase</fullName>
        <shortName evidence="4">TcSLS1.1</shortName>
        <ecNumber evidence="3">2.7.8.-</ecNumber>
    </recommendedName>
    <alternativeName>
        <fullName evidence="4">Inositol-phosphorylceramide synthase</fullName>
        <shortName evidence="4">IPC synthase</shortName>
    </alternativeName>
    <alternativeName>
        <fullName evidence="4">Sphingolipid synthase</fullName>
    </alternativeName>
</protein>
<organism>
    <name type="scientific">Trypanosoma cruzi (strain CL Brener)</name>
    <dbReference type="NCBI Taxonomy" id="353153"/>
    <lineage>
        <taxon>Eukaryota</taxon>
        <taxon>Discoba</taxon>
        <taxon>Euglenozoa</taxon>
        <taxon>Kinetoplastea</taxon>
        <taxon>Metakinetoplastina</taxon>
        <taxon>Trypanosomatida</taxon>
        <taxon>Trypanosomatidae</taxon>
        <taxon>Trypanosoma</taxon>
        <taxon>Schizotrypanum</taxon>
    </lineage>
</organism>
<sequence length="335" mass="37851">MVLMGPHSALRLLPLKTQAIRFVLLLLLSVLILAVALLVTNARMPDPKVVRPLPDIGFEVFPKVGWLEHLTDVCIFILNFLSLLVVFKLYLLHRQNEGLDELQPFSCCPLIGKIIFGVWDSGRQSGIEKRDAHLIAWIRYFTTYFIVLLFRAIVVVMTSYPATDNHCQNPMKITNPVKNVIMTLVTFGSGSIHCGDLMFSGHTVSITLSLLVQWIYGSMLHWVFRPASVLLVLLSFYSIIASRSHYTDDILVSFYITVTTFLVLRHSPDGAPWQLQLLIGWWPCCVSNEETEDSDRNPTFVAVEVFLPHGDYQCAERISEEKTTVGPACGNFGHW</sequence>
<dbReference type="EC" id="2.7.8.-" evidence="3"/>
<dbReference type="EMBL" id="AAHK01000012">
    <property type="protein sequence ID" value="EAN99655.1"/>
    <property type="molecule type" value="Genomic_DNA"/>
</dbReference>
<dbReference type="RefSeq" id="XP_821506.1">
    <property type="nucleotide sequence ID" value="XM_816413.1"/>
</dbReference>
<dbReference type="SMR" id="Q4E4I4"/>
<dbReference type="STRING" id="353153.Q4E4I4"/>
<dbReference type="PaxDb" id="353153-Q4E4I4"/>
<dbReference type="EnsemblProtists" id="EAN99655">
    <property type="protein sequence ID" value="EAN99655"/>
    <property type="gene ID" value="Tc00.1047053506885.124"/>
</dbReference>
<dbReference type="GeneID" id="3554461"/>
<dbReference type="KEGG" id="tcr:506885.124"/>
<dbReference type="eggNOG" id="KOG3058">
    <property type="taxonomic scope" value="Eukaryota"/>
</dbReference>
<dbReference type="InParanoid" id="Q4E4I4"/>
<dbReference type="OMA" id="SGAIHCG"/>
<dbReference type="Proteomes" id="UP000002296">
    <property type="component" value="Unassembled WGS sequence"/>
</dbReference>
<dbReference type="GO" id="GO:0005789">
    <property type="term" value="C:endoplasmic reticulum membrane"/>
    <property type="evidence" value="ECO:0007669"/>
    <property type="project" value="TreeGrafter"/>
</dbReference>
<dbReference type="GO" id="GO:0000139">
    <property type="term" value="C:Golgi membrane"/>
    <property type="evidence" value="ECO:0007669"/>
    <property type="project" value="TreeGrafter"/>
</dbReference>
<dbReference type="GO" id="GO:0005886">
    <property type="term" value="C:plasma membrane"/>
    <property type="evidence" value="ECO:0007669"/>
    <property type="project" value="TreeGrafter"/>
</dbReference>
<dbReference type="GO" id="GO:0047493">
    <property type="term" value="F:ceramide cholinephosphotransferase activity"/>
    <property type="evidence" value="ECO:0007669"/>
    <property type="project" value="TreeGrafter"/>
</dbReference>
<dbReference type="GO" id="GO:0016301">
    <property type="term" value="F:kinase activity"/>
    <property type="evidence" value="ECO:0007669"/>
    <property type="project" value="UniProtKB-KW"/>
</dbReference>
<dbReference type="GO" id="GO:0033188">
    <property type="term" value="F:sphingomyelin synthase activity"/>
    <property type="evidence" value="ECO:0007669"/>
    <property type="project" value="TreeGrafter"/>
</dbReference>
<dbReference type="GO" id="GO:0046513">
    <property type="term" value="P:ceramide biosynthetic process"/>
    <property type="evidence" value="ECO:0007669"/>
    <property type="project" value="TreeGrafter"/>
</dbReference>
<dbReference type="InterPro" id="IPR045221">
    <property type="entry name" value="Sphingomyelin_synth-like"/>
</dbReference>
<dbReference type="InterPro" id="IPR025749">
    <property type="entry name" value="Sphingomyelin_synth-like_dom"/>
</dbReference>
<dbReference type="PANTHER" id="PTHR21290:SF25">
    <property type="entry name" value="SPHINGOMYELIN SYNTHASE-RELATED PROTEIN 1"/>
    <property type="match status" value="1"/>
</dbReference>
<dbReference type="PANTHER" id="PTHR21290">
    <property type="entry name" value="SPHINGOMYELIN SYNTHETASE"/>
    <property type="match status" value="1"/>
</dbReference>
<dbReference type="Pfam" id="PF14360">
    <property type="entry name" value="PAP2_C"/>
    <property type="match status" value="1"/>
</dbReference>
<reference evidence="5" key="1">
    <citation type="journal article" date="2010" name="J. Biol. Chem.">
        <title>Cell-free synthesis and functional characterization of sphingolipid synthases from parasitic trypanosomatid protozoa.</title>
        <authorList>
            <person name="Sevova E.S."/>
            <person name="Goren M.A."/>
            <person name="Schwartz K.J."/>
            <person name="Hsu F.F."/>
            <person name="Turk J."/>
            <person name="Fox B.G."/>
            <person name="Bangs J.D."/>
        </authorList>
    </citation>
    <scope>NUCLEOTIDE SEQUENCE [GENOMIC DNA]</scope>
    <scope>FUNCTION</scope>
    <source>
        <strain evidence="3">CL Brener</strain>
    </source>
</reference>
<reference key="2">
    <citation type="journal article" date="2005" name="Science">
        <title>The genome sequence of Trypanosoma cruzi, etiologic agent of Chagas disease.</title>
        <authorList>
            <person name="El-Sayed N.M.A."/>
            <person name="Myler P.J."/>
            <person name="Bartholomeu D.C."/>
            <person name="Nilsson D."/>
            <person name="Aggarwal G."/>
            <person name="Tran A.-N."/>
            <person name="Ghedin E."/>
            <person name="Worthey E.A."/>
            <person name="Delcher A.L."/>
            <person name="Blandin G."/>
            <person name="Westenberger S.J."/>
            <person name="Caler E."/>
            <person name="Cerqueira G.C."/>
            <person name="Branche C."/>
            <person name="Haas B."/>
            <person name="Anupama A."/>
            <person name="Arner E."/>
            <person name="Aslund L."/>
            <person name="Attipoe P."/>
            <person name="Bontempi E."/>
            <person name="Bringaud F."/>
            <person name="Burton P."/>
            <person name="Cadag E."/>
            <person name="Campbell D.A."/>
            <person name="Carrington M."/>
            <person name="Crabtree J."/>
            <person name="Darban H."/>
            <person name="da Silveira J.F."/>
            <person name="de Jong P."/>
            <person name="Edwards K."/>
            <person name="Englund P.T."/>
            <person name="Fazelina G."/>
            <person name="Feldblyum T."/>
            <person name="Ferella M."/>
            <person name="Frasch A.C."/>
            <person name="Gull K."/>
            <person name="Horn D."/>
            <person name="Hou L."/>
            <person name="Huang Y."/>
            <person name="Kindlund E."/>
            <person name="Klingbeil M."/>
            <person name="Kluge S."/>
            <person name="Koo H."/>
            <person name="Lacerda D."/>
            <person name="Levin M.J."/>
            <person name="Lorenzi H."/>
            <person name="Louie T."/>
            <person name="Machado C.R."/>
            <person name="McCulloch R."/>
            <person name="McKenna A."/>
            <person name="Mizuno Y."/>
            <person name="Mottram J.C."/>
            <person name="Nelson S."/>
            <person name="Ochaya S."/>
            <person name="Osoegawa K."/>
            <person name="Pai G."/>
            <person name="Parsons M."/>
            <person name="Pentony M."/>
            <person name="Pettersson U."/>
            <person name="Pop M."/>
            <person name="Ramirez J.L."/>
            <person name="Rinta J."/>
            <person name="Robertson L."/>
            <person name="Salzberg S.L."/>
            <person name="Sanchez D.O."/>
            <person name="Seyler A."/>
            <person name="Sharma R."/>
            <person name="Shetty J."/>
            <person name="Simpson A.J."/>
            <person name="Sisk E."/>
            <person name="Tammi M.T."/>
            <person name="Tarleton R."/>
            <person name="Teixeira S."/>
            <person name="Van Aken S."/>
            <person name="Vogt C."/>
            <person name="Ward P.N."/>
            <person name="Wickstead B."/>
            <person name="Wortman J."/>
            <person name="White O."/>
            <person name="Fraser C.M."/>
            <person name="Stuart K.D."/>
            <person name="Andersson B."/>
        </authorList>
    </citation>
    <scope>NUCLEOTIDE SEQUENCE [LARGE SCALE GENOMIC DNA]</scope>
    <source>
        <strain>CL Brener</strain>
    </source>
</reference>
<accession>Q4E4I4</accession>
<proteinExistence type="inferred from homology"/>
<feature type="chain" id="PRO_0000413859" description="Phosphatidylinositol:ceramide inositolphosphotransferase">
    <location>
        <begin position="1"/>
        <end position="335"/>
    </location>
</feature>
<feature type="topological domain" description="Cytoplasmic" evidence="2">
    <location>
        <begin position="1"/>
        <end position="21"/>
    </location>
</feature>
<feature type="transmembrane region" description="Helical" evidence="2">
    <location>
        <begin position="22"/>
        <end position="42"/>
    </location>
</feature>
<feature type="topological domain" description="Extracellular" evidence="2">
    <location>
        <begin position="43"/>
        <end position="72"/>
    </location>
</feature>
<feature type="transmembrane region" description="Helical" evidence="2">
    <location>
        <begin position="73"/>
        <end position="93"/>
    </location>
</feature>
<feature type="topological domain" description="Cytoplasmic" evidence="2">
    <location>
        <begin position="94"/>
        <end position="98"/>
    </location>
</feature>
<feature type="transmembrane region" description="Helical" evidence="2">
    <location>
        <begin position="99"/>
        <end position="119"/>
    </location>
</feature>
<feature type="topological domain" description="Extracellular" evidence="2">
    <location>
        <begin position="120"/>
        <end position="139"/>
    </location>
</feature>
<feature type="transmembrane region" description="Helical" evidence="2">
    <location>
        <begin position="140"/>
        <end position="160"/>
    </location>
</feature>
<feature type="topological domain" description="Cytoplasmic" evidence="2">
    <location>
        <begin position="161"/>
        <end position="179"/>
    </location>
</feature>
<feature type="transmembrane region" description="Helical" evidence="2">
    <location>
        <begin position="180"/>
        <end position="200"/>
    </location>
</feature>
<feature type="topological domain" description="Extracellular" evidence="2">
    <location>
        <begin position="201"/>
        <end position="203"/>
    </location>
</feature>
<feature type="transmembrane region" description="Helical" evidence="2">
    <location>
        <begin position="204"/>
        <end position="224"/>
    </location>
</feature>
<feature type="topological domain" description="Cytoplasmic" evidence="2">
    <location>
        <begin position="225"/>
        <end position="335"/>
    </location>
</feature>
<feature type="active site" evidence="1">
    <location>
        <position position="202"/>
    </location>
</feature>
<feature type="active site" evidence="1">
    <location>
        <position position="245"/>
    </location>
</feature>
<feature type="active site" evidence="1">
    <location>
        <position position="249"/>
    </location>
</feature>
<feature type="sequence conflict" description="In Ref. 1; no nucleotide entry." evidence="5" ref="1">
    <original>L</original>
    <variation>I</variation>
    <location>
        <position position="10"/>
    </location>
</feature>
<feature type="sequence conflict" description="In Ref. 1; no nucleotide entry." evidence="5" ref="1">
    <original>HL</original>
    <variation>YV</variation>
    <location>
        <begin position="69"/>
        <end position="70"/>
    </location>
</feature>
<feature type="sequence conflict" description="In Ref. 1; no nucleotide entry." evidence="5" ref="1">
    <original>F</original>
    <variation>V</variation>
    <location>
        <position position="80"/>
    </location>
</feature>
<feature type="sequence conflict" description="In Ref. 1; no nucleotide entry." evidence="5" ref="1">
    <original>V</original>
    <variation>I</variation>
    <location>
        <position position="155"/>
    </location>
</feature>
<feature type="sequence conflict" description="In Ref. 1; no nucleotide entry." evidence="5" ref="1">
    <original>M</original>
    <variation>V</variation>
    <location>
        <position position="171"/>
    </location>
</feature>
<feature type="sequence conflict" description="In Ref. 1; no nucleotide entry." evidence="5" ref="1">
    <original>F</original>
    <variation>L</variation>
    <location>
        <position position="187"/>
    </location>
</feature>
<feature type="sequence conflict" description="In Ref. 1; no nucleotide entry." evidence="5" ref="1">
    <original>S</original>
    <variation>P</variation>
    <location>
        <position position="205"/>
    </location>
</feature>
<feature type="sequence conflict" description="In Ref. 1; no nucleotide entry." evidence="5" ref="1">
    <original>D</original>
    <variation>E</variation>
    <location>
        <position position="269"/>
    </location>
</feature>
<feature type="sequence conflict" description="In Ref. 1; no nucleotide entry." evidence="5" ref="1">
    <original>N</original>
    <variation>H</variation>
    <location>
        <position position="297"/>
    </location>
</feature>
<feature type="sequence conflict" description="In Ref. 1; no nucleotide entry." evidence="5" ref="1">
    <original>S</original>
    <variation>R</variation>
    <location>
        <position position="319"/>
    </location>
</feature>
<gene>
    <name type="ORF">Tc00.1047053506885.124</name>
</gene>